<dbReference type="EMBL" id="L26087">
    <property type="protein sequence ID" value="AAB41113.1"/>
    <property type="molecule type" value="mRNA"/>
</dbReference>
<dbReference type="EMBL" id="L26264">
    <property type="protein sequence ID" value="AAA19246.1"/>
    <property type="molecule type" value="mRNA"/>
</dbReference>
<dbReference type="EMBL" id="U06069">
    <property type="protein sequence ID" value="AAA17987.1"/>
    <property type="molecule type" value="mRNA"/>
</dbReference>
<dbReference type="EMBL" id="U21116">
    <property type="protein sequence ID" value="AAA96350.1"/>
    <property type="molecule type" value="mRNA"/>
</dbReference>
<dbReference type="EMBL" id="BC088850">
    <property type="protein sequence ID" value="AAH88850.1"/>
    <property type="molecule type" value="mRNA"/>
</dbReference>
<dbReference type="PIR" id="A53455">
    <property type="entry name" value="A53455"/>
</dbReference>
<dbReference type="PIR" id="S39345">
    <property type="entry name" value="S39345"/>
</dbReference>
<dbReference type="RefSeq" id="NP_037170.1">
    <molecule id="P61765-1"/>
    <property type="nucleotide sequence ID" value="NM_013038.4"/>
</dbReference>
<dbReference type="RefSeq" id="XP_006234001.1">
    <molecule id="P61765-2"/>
    <property type="nucleotide sequence ID" value="XM_006233939.4"/>
</dbReference>
<dbReference type="RefSeq" id="XP_063139233.1">
    <molecule id="P61765-2"/>
    <property type="nucleotide sequence ID" value="XM_063283163.1"/>
</dbReference>
<dbReference type="PDB" id="3C98">
    <property type="method" value="X-ray"/>
    <property type="resolution" value="2.60 A"/>
    <property type="chains" value="A=1-594"/>
</dbReference>
<dbReference type="PDB" id="3PUJ">
    <property type="method" value="X-ray"/>
    <property type="resolution" value="3.31 A"/>
    <property type="chains" value="A/B=1-594"/>
</dbReference>
<dbReference type="PDB" id="4JEH">
    <property type="method" value="X-ray"/>
    <property type="resolution" value="2.50 A"/>
    <property type="chains" value="A=1-594"/>
</dbReference>
<dbReference type="PDB" id="4JEU">
    <property type="method" value="X-ray"/>
    <property type="resolution" value="3.20 A"/>
    <property type="chains" value="A=3-592"/>
</dbReference>
<dbReference type="PDB" id="6LPC">
    <property type="method" value="X-ray"/>
    <property type="resolution" value="3.40 A"/>
    <property type="chains" value="A/B=1-594"/>
</dbReference>
<dbReference type="PDB" id="7UDB">
    <property type="method" value="EM"/>
    <property type="resolution" value="3.50 A"/>
    <property type="chains" value="A=1-594"/>
</dbReference>
<dbReference type="PDB" id="7UDC">
    <property type="method" value="EM"/>
    <property type="resolution" value="3.70 A"/>
    <property type="chains" value="A=1-594"/>
</dbReference>
<dbReference type="PDB" id="7XSJ">
    <property type="method" value="X-ray"/>
    <property type="resolution" value="3.20 A"/>
    <property type="chains" value="A=1-594"/>
</dbReference>
<dbReference type="PDBsum" id="3C98"/>
<dbReference type="PDBsum" id="3PUJ"/>
<dbReference type="PDBsum" id="4JEH"/>
<dbReference type="PDBsum" id="4JEU"/>
<dbReference type="PDBsum" id="6LPC"/>
<dbReference type="PDBsum" id="7UDB"/>
<dbReference type="PDBsum" id="7UDC"/>
<dbReference type="PDBsum" id="7XSJ"/>
<dbReference type="EMDB" id="EMD-26455"/>
<dbReference type="EMDB" id="EMD-26456"/>
<dbReference type="SMR" id="P61765"/>
<dbReference type="BioGRID" id="247589">
    <property type="interactions" value="24"/>
</dbReference>
<dbReference type="CORUM" id="P61765"/>
<dbReference type="DIP" id="DIP-766N"/>
<dbReference type="FunCoup" id="P61765">
    <property type="interactions" value="3329"/>
</dbReference>
<dbReference type="IntAct" id="P61765">
    <property type="interactions" value="14"/>
</dbReference>
<dbReference type="MINT" id="P61765"/>
<dbReference type="STRING" id="10116.ENSRNOP00000021189"/>
<dbReference type="iPTMnet" id="P61765"/>
<dbReference type="PhosphoSitePlus" id="P61765"/>
<dbReference type="SwissPalm" id="P61765"/>
<dbReference type="jPOST" id="P61765"/>
<dbReference type="PaxDb" id="10116-ENSRNOP00000021189"/>
<dbReference type="Ensembl" id="ENSRNOT00000021178.9">
    <molecule id="P61765-1"/>
    <property type="protein sequence ID" value="ENSRNOP00000021178.5"/>
    <property type="gene ID" value="ENSRNOG00000015420.9"/>
</dbReference>
<dbReference type="Ensembl" id="ENSRNOT00000021189.6">
    <molecule id="P61765-2"/>
    <property type="protein sequence ID" value="ENSRNOP00000021189.4"/>
    <property type="gene ID" value="ENSRNOG00000015420.9"/>
</dbReference>
<dbReference type="GeneID" id="25558"/>
<dbReference type="KEGG" id="rno:25558"/>
<dbReference type="UCSC" id="RGD:3785">
    <property type="organism name" value="rat"/>
</dbReference>
<dbReference type="AGR" id="RGD:3785"/>
<dbReference type="CTD" id="6812"/>
<dbReference type="RGD" id="3785">
    <property type="gene designation" value="Stxbp1"/>
</dbReference>
<dbReference type="eggNOG" id="KOG1300">
    <property type="taxonomic scope" value="Eukaryota"/>
</dbReference>
<dbReference type="GeneTree" id="ENSGT00940000155127"/>
<dbReference type="HOGENOM" id="CLU_009210_2_0_1"/>
<dbReference type="InParanoid" id="P61765"/>
<dbReference type="OMA" id="PFTRPHT"/>
<dbReference type="OrthoDB" id="2228at2759"/>
<dbReference type="PhylomeDB" id="P61765"/>
<dbReference type="TreeFam" id="TF313242"/>
<dbReference type="Reactome" id="R-RNO-181429">
    <property type="pathway name" value="Serotonin Neurotransmitter Release Cycle"/>
</dbReference>
<dbReference type="Reactome" id="R-RNO-181430">
    <property type="pathway name" value="Norepinephrine Neurotransmitter Release Cycle"/>
</dbReference>
<dbReference type="Reactome" id="R-RNO-210500">
    <property type="pathway name" value="Glutamate Neurotransmitter Release Cycle"/>
</dbReference>
<dbReference type="Reactome" id="R-RNO-212676">
    <property type="pathway name" value="Dopamine Neurotransmitter Release Cycle"/>
</dbReference>
<dbReference type="Reactome" id="R-RNO-264642">
    <property type="pathway name" value="Acetylcholine Neurotransmitter Release Cycle"/>
</dbReference>
<dbReference type="Reactome" id="R-RNO-888590">
    <property type="pathway name" value="GABA synthesis, release, reuptake and degradation"/>
</dbReference>
<dbReference type="CD-CODE" id="34881ED2">
    <property type="entry name" value="Nucleolus"/>
</dbReference>
<dbReference type="EvolutionaryTrace" id="P61765"/>
<dbReference type="PRO" id="PR:P61765"/>
<dbReference type="Proteomes" id="UP000002494">
    <property type="component" value="Chromosome 3"/>
</dbReference>
<dbReference type="Bgee" id="ENSRNOG00000015420">
    <property type="expression patterns" value="Expressed in cerebellum and 19 other cell types or tissues"/>
</dbReference>
<dbReference type="GO" id="GO:0030424">
    <property type="term" value="C:axon"/>
    <property type="evidence" value="ECO:0000314"/>
    <property type="project" value="RGD"/>
</dbReference>
<dbReference type="GO" id="GO:0005737">
    <property type="term" value="C:cytoplasm"/>
    <property type="evidence" value="ECO:0000314"/>
    <property type="project" value="BHF-UCL"/>
</dbReference>
<dbReference type="GO" id="GO:0005829">
    <property type="term" value="C:cytosol"/>
    <property type="evidence" value="ECO:0000304"/>
    <property type="project" value="Reactome"/>
</dbReference>
<dbReference type="GO" id="GO:0098888">
    <property type="term" value="C:extrinsic component of presynaptic membrane"/>
    <property type="evidence" value="ECO:0000266"/>
    <property type="project" value="RGD"/>
</dbReference>
<dbReference type="GO" id="GO:0098978">
    <property type="term" value="C:glutamatergic synapse"/>
    <property type="evidence" value="ECO:0000266"/>
    <property type="project" value="RGD"/>
</dbReference>
<dbReference type="GO" id="GO:0005654">
    <property type="term" value="C:nucleoplasm"/>
    <property type="evidence" value="ECO:0007669"/>
    <property type="project" value="Ensembl"/>
</dbReference>
<dbReference type="GO" id="GO:0098688">
    <property type="term" value="C:parallel fiber to Purkinje cell synapse"/>
    <property type="evidence" value="ECO:0000266"/>
    <property type="project" value="RGD"/>
</dbReference>
<dbReference type="GO" id="GO:0048471">
    <property type="term" value="C:perinuclear region of cytoplasm"/>
    <property type="evidence" value="ECO:0000314"/>
    <property type="project" value="RGD"/>
</dbReference>
<dbReference type="GO" id="GO:0045335">
    <property type="term" value="C:phagocytic vesicle"/>
    <property type="evidence" value="ECO:0000266"/>
    <property type="project" value="RGD"/>
</dbReference>
<dbReference type="GO" id="GO:0005886">
    <property type="term" value="C:plasma membrane"/>
    <property type="evidence" value="ECO:0000266"/>
    <property type="project" value="RGD"/>
</dbReference>
<dbReference type="GO" id="GO:0031091">
    <property type="term" value="C:platelet alpha granule"/>
    <property type="evidence" value="ECO:0000266"/>
    <property type="project" value="RGD"/>
</dbReference>
<dbReference type="GO" id="GO:0098794">
    <property type="term" value="C:postsynapse"/>
    <property type="evidence" value="ECO:0000314"/>
    <property type="project" value="RGD"/>
</dbReference>
<dbReference type="GO" id="GO:0098793">
    <property type="term" value="C:presynapse"/>
    <property type="evidence" value="ECO:0000314"/>
    <property type="project" value="RGD"/>
</dbReference>
<dbReference type="GO" id="GO:0098831">
    <property type="term" value="C:presynaptic active zone cytoplasmic component"/>
    <property type="evidence" value="ECO:0000266"/>
    <property type="project" value="RGD"/>
</dbReference>
<dbReference type="GO" id="GO:0099523">
    <property type="term" value="C:presynaptic cytosol"/>
    <property type="evidence" value="ECO:0000266"/>
    <property type="project" value="RGD"/>
</dbReference>
<dbReference type="GO" id="GO:0032991">
    <property type="term" value="C:protein-containing complex"/>
    <property type="evidence" value="ECO:0000314"/>
    <property type="project" value="RGD"/>
</dbReference>
<dbReference type="GO" id="GO:0030141">
    <property type="term" value="C:secretory granule"/>
    <property type="evidence" value="ECO:0000318"/>
    <property type="project" value="GO_Central"/>
</dbReference>
<dbReference type="GO" id="GO:0043195">
    <property type="term" value="C:terminal bouton"/>
    <property type="evidence" value="ECO:0007005"/>
    <property type="project" value="ParkinsonsUK-UCL"/>
</dbReference>
<dbReference type="GO" id="GO:0042802">
    <property type="term" value="F:identical protein binding"/>
    <property type="evidence" value="ECO:0000353"/>
    <property type="project" value="BHF-UCL"/>
</dbReference>
<dbReference type="GO" id="GO:0060090">
    <property type="term" value="F:molecular adaptor activity"/>
    <property type="evidence" value="ECO:0000269"/>
    <property type="project" value="DisProt"/>
</dbReference>
<dbReference type="GO" id="GO:0043274">
    <property type="term" value="F:phospholipase binding"/>
    <property type="evidence" value="ECO:0000314"/>
    <property type="project" value="RGD"/>
</dbReference>
<dbReference type="GO" id="GO:0019904">
    <property type="term" value="F:protein domain specific binding"/>
    <property type="evidence" value="ECO:0000314"/>
    <property type="project" value="RGD"/>
</dbReference>
<dbReference type="GO" id="GO:0019901">
    <property type="term" value="F:protein kinase binding"/>
    <property type="evidence" value="ECO:0000353"/>
    <property type="project" value="RGD"/>
</dbReference>
<dbReference type="GO" id="GO:0000149">
    <property type="term" value="F:SNARE binding"/>
    <property type="evidence" value="ECO:0000314"/>
    <property type="project" value="RGD"/>
</dbReference>
<dbReference type="GO" id="GO:0019905">
    <property type="term" value="F:syntaxin binding"/>
    <property type="evidence" value="ECO:0000314"/>
    <property type="project" value="RGD"/>
</dbReference>
<dbReference type="GO" id="GO:0017075">
    <property type="term" value="F:syntaxin-1 binding"/>
    <property type="evidence" value="ECO:0000314"/>
    <property type="project" value="MGI"/>
</dbReference>
<dbReference type="GO" id="GO:0007412">
    <property type="term" value="P:axon target recognition"/>
    <property type="evidence" value="ECO:0000266"/>
    <property type="project" value="RGD"/>
</dbReference>
<dbReference type="GO" id="GO:0071346">
    <property type="term" value="P:cellular response to type II interferon"/>
    <property type="evidence" value="ECO:0000266"/>
    <property type="project" value="RGD"/>
</dbReference>
<dbReference type="GO" id="GO:0003006">
    <property type="term" value="P:developmental process involved in reproduction"/>
    <property type="evidence" value="ECO:0000315"/>
    <property type="project" value="RGD"/>
</dbReference>
<dbReference type="GO" id="GO:0051649">
    <property type="term" value="P:establishment of localization in cell"/>
    <property type="evidence" value="ECO:0000266"/>
    <property type="project" value="RGD"/>
</dbReference>
<dbReference type="GO" id="GO:0006887">
    <property type="term" value="P:exocytosis"/>
    <property type="evidence" value="ECO:0000266"/>
    <property type="project" value="RGD"/>
</dbReference>
<dbReference type="GO" id="GO:0006886">
    <property type="term" value="P:intracellular protein transport"/>
    <property type="evidence" value="ECO:0000318"/>
    <property type="project" value="GO_Central"/>
</dbReference>
<dbReference type="GO" id="GO:0060292">
    <property type="term" value="P:long-term synaptic depression"/>
    <property type="evidence" value="ECO:0000266"/>
    <property type="project" value="RGD"/>
</dbReference>
<dbReference type="GO" id="GO:0043524">
    <property type="term" value="P:negative regulation of neuron apoptotic process"/>
    <property type="evidence" value="ECO:0000266"/>
    <property type="project" value="RGD"/>
</dbReference>
<dbReference type="GO" id="GO:0031333">
    <property type="term" value="P:negative regulation of protein-containing complex assembly"/>
    <property type="evidence" value="ECO:0000314"/>
    <property type="project" value="ParkinsonsUK-UCL"/>
</dbReference>
<dbReference type="GO" id="GO:0035544">
    <property type="term" value="P:negative regulation of SNARE complex assembly"/>
    <property type="evidence" value="ECO:0000304"/>
    <property type="project" value="ParkinsonsUK-UCL"/>
</dbReference>
<dbReference type="GO" id="GO:0032229">
    <property type="term" value="P:negative regulation of synaptic transmission, GABAergic"/>
    <property type="evidence" value="ECO:0000266"/>
    <property type="project" value="RGD"/>
</dbReference>
<dbReference type="GO" id="GO:0007274">
    <property type="term" value="P:neuromuscular synaptic transmission"/>
    <property type="evidence" value="ECO:0000266"/>
    <property type="project" value="RGD"/>
</dbReference>
<dbReference type="GO" id="GO:0051402">
    <property type="term" value="P:neuron apoptotic process"/>
    <property type="evidence" value="ECO:0000266"/>
    <property type="project" value="RGD"/>
</dbReference>
<dbReference type="GO" id="GO:0007269">
    <property type="term" value="P:neurotransmitter secretion"/>
    <property type="evidence" value="ECO:0000266"/>
    <property type="project" value="RGD"/>
</dbReference>
<dbReference type="GO" id="GO:0070527">
    <property type="term" value="P:platelet aggregation"/>
    <property type="evidence" value="ECO:0000266"/>
    <property type="project" value="RGD"/>
</dbReference>
<dbReference type="GO" id="GO:0002576">
    <property type="term" value="P:platelet degranulation"/>
    <property type="evidence" value="ECO:0000266"/>
    <property type="project" value="RGD"/>
</dbReference>
<dbReference type="GO" id="GO:0045956">
    <property type="term" value="P:positive regulation of calcium ion-dependent exocytosis"/>
    <property type="evidence" value="ECO:0000266"/>
    <property type="project" value="RGD"/>
</dbReference>
<dbReference type="GO" id="GO:0045921">
    <property type="term" value="P:positive regulation of exocytosis"/>
    <property type="evidence" value="ECO:0000315"/>
    <property type="project" value="RGD"/>
</dbReference>
<dbReference type="GO" id="GO:1903296">
    <property type="term" value="P:positive regulation of glutamate secretion, neurotransmission"/>
    <property type="evidence" value="ECO:0000315"/>
    <property type="project" value="RGD"/>
</dbReference>
<dbReference type="GO" id="GO:0043306">
    <property type="term" value="P:positive regulation of mast cell degranulation"/>
    <property type="evidence" value="ECO:0000315"/>
    <property type="project" value="RGD"/>
</dbReference>
<dbReference type="GO" id="GO:0106022">
    <property type="term" value="P:positive regulation of vesicle docking"/>
    <property type="evidence" value="ECO:0000314"/>
    <property type="project" value="RGD"/>
</dbReference>
<dbReference type="GO" id="GO:0099525">
    <property type="term" value="P:presynaptic dense core vesicle exocytosis"/>
    <property type="evidence" value="ECO:0000318"/>
    <property type="project" value="GO_Central"/>
</dbReference>
<dbReference type="GO" id="GO:0072659">
    <property type="term" value="P:protein localization to plasma membrane"/>
    <property type="evidence" value="ECO:0000266"/>
    <property type="project" value="RGD"/>
</dbReference>
<dbReference type="GO" id="GO:0050821">
    <property type="term" value="P:protein stabilization"/>
    <property type="evidence" value="ECO:0000314"/>
    <property type="project" value="MGI"/>
</dbReference>
<dbReference type="GO" id="GO:2000367">
    <property type="term" value="P:regulation of acrosomal vesicle exocytosis"/>
    <property type="evidence" value="ECO:0000266"/>
    <property type="project" value="RGD"/>
</dbReference>
<dbReference type="GO" id="GO:0010807">
    <property type="term" value="P:regulation of synaptic vesicle priming"/>
    <property type="evidence" value="ECO:0000314"/>
    <property type="project" value="UniProtKB"/>
</dbReference>
<dbReference type="GO" id="GO:0031338">
    <property type="term" value="P:regulation of vesicle fusion"/>
    <property type="evidence" value="ECO:0000314"/>
    <property type="project" value="RGD"/>
</dbReference>
<dbReference type="GO" id="GO:0032355">
    <property type="term" value="P:response to estradiol"/>
    <property type="evidence" value="ECO:0000270"/>
    <property type="project" value="RGD"/>
</dbReference>
<dbReference type="GO" id="GO:0035493">
    <property type="term" value="P:SNARE complex assembly"/>
    <property type="evidence" value="ECO:0000266"/>
    <property type="project" value="RGD"/>
</dbReference>
<dbReference type="GO" id="GO:0016188">
    <property type="term" value="P:synaptic vesicle maturation"/>
    <property type="evidence" value="ECO:0000266"/>
    <property type="project" value="RGD"/>
</dbReference>
<dbReference type="GO" id="GO:0016082">
    <property type="term" value="P:synaptic vesicle priming"/>
    <property type="evidence" value="ECO:0000266"/>
    <property type="project" value="RGD"/>
</dbReference>
<dbReference type="GO" id="GO:0006904">
    <property type="term" value="P:vesicle docking involved in exocytosis"/>
    <property type="evidence" value="ECO:0000250"/>
    <property type="project" value="ParkinsonsUK-UCL"/>
</dbReference>
<dbReference type="DisProt" id="DP02653"/>
<dbReference type="FunFam" id="1.25.40.60:FF:000001">
    <property type="entry name" value="syntaxin-binding protein 1 isoform X2"/>
    <property type="match status" value="1"/>
</dbReference>
<dbReference type="FunFam" id="3.40.50.2060:FF:000001">
    <property type="entry name" value="syntaxin-binding protein 1 isoform X2"/>
    <property type="match status" value="1"/>
</dbReference>
<dbReference type="FunFam" id="3.90.830.10:FF:000001">
    <property type="entry name" value="syntaxin-binding protein 1 isoform X2"/>
    <property type="match status" value="1"/>
</dbReference>
<dbReference type="Gene3D" id="1.25.40.60">
    <property type="match status" value="1"/>
</dbReference>
<dbReference type="Gene3D" id="3.40.50.1910">
    <property type="match status" value="1"/>
</dbReference>
<dbReference type="Gene3D" id="3.40.50.2060">
    <property type="match status" value="1"/>
</dbReference>
<dbReference type="Gene3D" id="3.90.830.10">
    <property type="entry name" value="Syntaxin Binding Protein 1, Chain A, domain 2"/>
    <property type="match status" value="1"/>
</dbReference>
<dbReference type="InterPro" id="IPR043154">
    <property type="entry name" value="Sec-1-like_dom1"/>
</dbReference>
<dbReference type="InterPro" id="IPR043127">
    <property type="entry name" value="Sec-1-like_dom3a"/>
</dbReference>
<dbReference type="InterPro" id="IPR001619">
    <property type="entry name" value="Sec1-like"/>
</dbReference>
<dbReference type="InterPro" id="IPR027482">
    <property type="entry name" value="Sec1-like_dom2"/>
</dbReference>
<dbReference type="InterPro" id="IPR036045">
    <property type="entry name" value="Sec1-like_sf"/>
</dbReference>
<dbReference type="PANTHER" id="PTHR11679">
    <property type="entry name" value="VESICLE PROTEIN SORTING-ASSOCIATED"/>
    <property type="match status" value="1"/>
</dbReference>
<dbReference type="Pfam" id="PF00995">
    <property type="entry name" value="Sec1"/>
    <property type="match status" value="1"/>
</dbReference>
<dbReference type="PIRSF" id="PIRSF005715">
    <property type="entry name" value="VPS45_Sec1"/>
    <property type="match status" value="1"/>
</dbReference>
<dbReference type="SUPFAM" id="SSF56815">
    <property type="entry name" value="Sec1/munc18-like (SM) proteins"/>
    <property type="match status" value="1"/>
</dbReference>
<proteinExistence type="evidence at protein level"/>
<accession>P61765</accession>
<accession>Q28208</accession>
<accession>Q62759</accession>
<accession>Q64320</accession>
<accession>Q96TG8</accession>
<sequence>MAPIGLKAVVGEKIMHDVIKKVKKKGEWKVLVVDQLSMRMLSSCCKMTDIMTEGITIVEDINKRREPLPSLEAVYLITPSEKSVHSLISDFKDPPTAKYRAAHVFFTDSCPDALFNELVKSRAAKVIKTLTEINIAFLPYESQVYSLDSADSFQSFYSPHKAQMKNPILERLAEQIATLCATLKEYPAVRYRGEYKDNALLAQLIQDKLDAYKADDPTMGEGPDKARSQLLILDRGFDPSSPVLHELTFQAMSYDLLPIENDVYKYETSGIGEARVKEVLLDEDDDLWIALRHKHIAEVSQEVTRSLKDFSSSKRMNTGEKTTMRDLSQMLKKMPQYQKELSKYSTHLHLAEDCMKHYQGTVDKLCRVEQDLAMGTDAEGEKIKDPMRAIVPILLDANVSTYDKIRIILLYIFLKNGITEENLNKLIQHAQIPPEDSEIITNMAHLGVPIVTDSTLRRRSKPERKERISEQTYQLSRWTPIIKDIMEDTIEDKLDTKHYPYISTRSSASFSTTAVSARYGHWHKNKAPGEYRSGPRLIIFILGGVSLNEMRCAYEVTQANGKWEVLIGSTHILTPQKLLDTLKKLNKTDEEISS</sequence>
<protein>
    <recommendedName>
        <fullName>Syntaxin-binding protein 1</fullName>
    </recommendedName>
    <alternativeName>
        <fullName>N-Sec1</fullName>
    </alternativeName>
    <alternativeName>
        <fullName>Protein unc-18 homolog 1</fullName>
        <shortName>Unc18-1</shortName>
    </alternativeName>
    <alternativeName>
        <fullName>Protein unc-18 homolog A</fullName>
        <shortName>Unc-18A</shortName>
    </alternativeName>
    <alternativeName>
        <fullName>p67</fullName>
    </alternativeName>
    <alternativeName>
        <fullName>rbSec1</fullName>
    </alternativeName>
</protein>
<gene>
    <name type="primary">Stxbp1</name>
    <name type="synonym">Unc18a</name>
</gene>
<comment type="function">
    <text evidence="1 6">Participates in the regulation of synaptic vesicle docking and fusion through interaction with GTP-binding proteins (PubMed:21689256). Essential for neurotransmission and binds syntaxin, a component of the synaptic vesicle fusion machinery probably in a 1:1 ratio. Can interact with syntaxins 1, 2, and 3 but not syntaxin 4. Involved in the release of neurotransmitters from neurons through interacting with SNARE complex component STX1A and mediating the assembly of the SNARE complex at synaptic membranes (By similarity). May play a role in determining the specificity of intracellular fusion reactions. Involved in the release of neurotransmitters from neurons through interacting with SNARE complex component STX1A and mediating the assembly of the SNARE complex at synaptic membranes (By similarity).</text>
</comment>
<comment type="subunit">
    <text evidence="1 2 3 4 5 6">Interacts with SYTL4 (PubMed:12058058). Interacts with STX1A (PubMed:10746715). The interaction recruits SNARE complex components SNAP25 and VAMP2 and mediates neurotransmitter release from neurons (By similarity). Interacts with alpha-synuclein/SNCA; this interaction controls SNCA self-replicating aggregation (By similarity). Interacts with RAB3A; this interaction promotes RAB3A dissociation from the vesicle membrane (PubMed:21689256). Interacts with CABP5 (By similarity).</text>
</comment>
<comment type="interaction">
    <interactant intactId="EBI-1029097">
        <id>P61765</id>
    </interactant>
    <interactant intactId="EBI-704760">
        <id>O35430</id>
        <label>Apba1</label>
    </interactant>
    <organismsDiffer>false</organismsDiffer>
    <experiments>5</experiments>
</comment>
<comment type="interaction">
    <interactant intactId="EBI-1029097">
        <id>P61765</id>
    </interactant>
    <interactant intactId="EBI-2028211">
        <id>O35431</id>
        <label>Apba2</label>
    </interactant>
    <organismsDiffer>false</organismsDiffer>
    <experiments>3</experiments>
</comment>
<comment type="interaction">
    <interactant intactId="EBI-1029097">
        <id>P61765</id>
    </interactant>
    <interactant intactId="EBI-539720">
        <id>P32851</id>
        <label>Stx1a</label>
    </interactant>
    <organismsDiffer>false</organismsDiffer>
    <experiments>22</experiments>
</comment>
<comment type="interaction">
    <interactant intactId="EBI-1029097">
        <id>P61765</id>
    </interactant>
    <interactant intactId="EBI-645716">
        <id>P70452</id>
        <label>Stx4</label>
    </interactant>
    <organismsDiffer>true</organismsDiffer>
    <experiments>2</experiments>
</comment>
<comment type="subcellular location">
    <subcellularLocation>
        <location evidence="3">Cytoplasm</location>
        <location evidence="3">Cytosol</location>
    </subcellularLocation>
    <subcellularLocation>
        <location>Membrane</location>
        <topology>Peripheral membrane protein</topology>
    </subcellularLocation>
</comment>
<comment type="alternative products">
    <event type="alternative splicing"/>
    <isoform>
        <id>P61765-1</id>
        <id>Q64320-1</id>
        <name>1</name>
        <name>A</name>
        <sequence type="displayed"/>
    </isoform>
    <isoform>
        <id>P61765-2</id>
        <id>Q64320-2</id>
        <name>2</name>
        <name>BE</name>
        <name>HUNC18b</name>
        <sequence type="described" ref="VSP_010497"/>
    </isoform>
</comment>
<comment type="tissue specificity">
    <text>Brain and spinal cord. Highly enriched in axons.</text>
</comment>
<comment type="developmental stage">
    <text>Faint levels are detectable at embryonic day 14, with levels rising at later embryonic ages and peaking at postnatal day 7.</text>
</comment>
<comment type="similarity">
    <text evidence="8">Belongs to the STXBP/unc-18/SEC1 family.</text>
</comment>
<keyword id="KW-0002">3D-structure</keyword>
<keyword id="KW-0025">Alternative splicing</keyword>
<keyword id="KW-0963">Cytoplasm</keyword>
<keyword id="KW-0903">Direct protein sequencing</keyword>
<keyword id="KW-0472">Membrane</keyword>
<keyword id="KW-0597">Phosphoprotein</keyword>
<keyword id="KW-0653">Protein transport</keyword>
<keyword id="KW-1185">Reference proteome</keyword>
<keyword id="KW-0813">Transport</keyword>
<evidence type="ECO:0000250" key="1">
    <source>
        <dbReference type="UniProtKB" id="O08599"/>
    </source>
</evidence>
<evidence type="ECO:0000250" key="2">
    <source>
        <dbReference type="UniProtKB" id="P61763"/>
    </source>
</evidence>
<evidence type="ECO:0000250" key="3">
    <source>
        <dbReference type="UniProtKB" id="P61764"/>
    </source>
</evidence>
<evidence type="ECO:0000269" key="4">
    <source>
    </source>
</evidence>
<evidence type="ECO:0000269" key="5">
    <source>
    </source>
</evidence>
<evidence type="ECO:0000269" key="6">
    <source>
    </source>
</evidence>
<evidence type="ECO:0000303" key="7">
    <source>
    </source>
</evidence>
<evidence type="ECO:0000305" key="8"/>
<evidence type="ECO:0007744" key="9">
    <source>
    </source>
</evidence>
<evidence type="ECO:0007829" key="10">
    <source>
        <dbReference type="PDB" id="3C98"/>
    </source>
</evidence>
<evidence type="ECO:0007829" key="11">
    <source>
        <dbReference type="PDB" id="3PUJ"/>
    </source>
</evidence>
<evidence type="ECO:0007829" key="12">
    <source>
        <dbReference type="PDB" id="4JEH"/>
    </source>
</evidence>
<evidence type="ECO:0007829" key="13">
    <source>
        <dbReference type="PDB" id="4JEU"/>
    </source>
</evidence>
<evidence type="ECO:0007829" key="14">
    <source>
        <dbReference type="PDB" id="6LPC"/>
    </source>
</evidence>
<evidence type="ECO:0007829" key="15">
    <source>
        <dbReference type="PDB" id="7UDB"/>
    </source>
</evidence>
<evidence type="ECO:0007829" key="16">
    <source>
        <dbReference type="PDB" id="7XSJ"/>
    </source>
</evidence>
<organism>
    <name type="scientific">Rattus norvegicus</name>
    <name type="common">Rat</name>
    <dbReference type="NCBI Taxonomy" id="10116"/>
    <lineage>
        <taxon>Eukaryota</taxon>
        <taxon>Metazoa</taxon>
        <taxon>Chordata</taxon>
        <taxon>Craniata</taxon>
        <taxon>Vertebrata</taxon>
        <taxon>Euteleostomi</taxon>
        <taxon>Mammalia</taxon>
        <taxon>Eutheria</taxon>
        <taxon>Euarchontoglires</taxon>
        <taxon>Glires</taxon>
        <taxon>Rodentia</taxon>
        <taxon>Myomorpha</taxon>
        <taxon>Muroidea</taxon>
        <taxon>Muridae</taxon>
        <taxon>Murinae</taxon>
        <taxon>Rattus</taxon>
    </lineage>
</organism>
<reference key="1">
    <citation type="journal article" date="1993" name="Nature">
        <title>Synaptic vesicle fusion complex contains unc-18 homologue bound to syntaxin.</title>
        <authorList>
            <person name="Hata Y."/>
            <person name="Slaughter C.A."/>
            <person name="Suedhof T.C."/>
        </authorList>
    </citation>
    <scope>NUCLEOTIDE SEQUENCE [MRNA] (ISOFORM 1)</scope>
    <scope>PARTIAL PROTEIN SEQUENCE</scope>
    <source>
        <tissue>Brain</tissue>
    </source>
</reference>
<reference key="2">
    <citation type="journal article" date="1994" name="Proc. Natl. Acad. Sci. U.S.A.">
        <title>n-Sec1: a neural-specific syntaxin-binding protein.</title>
        <authorList>
            <person name="Pevsner J."/>
            <person name="Hsu S.-C."/>
            <person name="Scheller R.H."/>
        </authorList>
    </citation>
    <scope>NUCLEOTIDE SEQUENCE [MRNA] (ISOFORM 1)</scope>
    <source>
        <tissue>Brain cortex</tissue>
    </source>
</reference>
<reference key="3">
    <citation type="journal article" date="1994" name="Proc. Natl. Acad. Sci. U.S.A.">
        <title>A rat brain Sec1 homologue related to Rop and UNC18 interacts with syntaxin.</title>
        <authorList>
            <person name="Garcia E.P."/>
            <person name="Gatti E."/>
            <person name="Butler M."/>
            <person name="Burton J."/>
            <person name="de Camilli P."/>
        </authorList>
    </citation>
    <scope>NUCLEOTIDE SEQUENCE [MRNA] (ISOFORM 1)</scope>
    <source>
        <tissue>Brain</tissue>
    </source>
</reference>
<reference key="4">
    <citation type="journal article" date="1995" name="J. Cell Biol.">
        <title>rbSec1A and B colocalize with syntaxin 1 and SNAP-25 throughout the axon, but are not in a stable complex with syntaxin.</title>
        <authorList>
            <person name="Garcia E.P."/>
            <person name="McPherson P.S."/>
            <person name="Chilcote T.J."/>
            <person name="Takei K."/>
            <person name="de Camilli P."/>
        </authorList>
    </citation>
    <scope>NUCLEOTIDE SEQUENCE [MRNA] (ISOFORM 2)</scope>
    <scope>ALTERNATIVE SPLICING</scope>
    <source>
        <strain>Sprague-Dawley</strain>
        <tissue>Brain</tissue>
    </source>
</reference>
<reference key="5">
    <citation type="journal article" date="1995" name="J. Neurochem.">
        <title>Molecular characterization of a neuronal-specific protein that stimulates the activity of Cdk5.</title>
        <authorList>
            <person name="Shetty K.T."/>
            <person name="Kaech S."/>
            <person name="Link W.T."/>
            <person name="Jaffe H."/>
            <person name="Flores C.M."/>
            <person name="Wray S."/>
            <person name="Pant H.C."/>
            <person name="Beushausen S."/>
        </authorList>
    </citation>
    <scope>NUCLEOTIDE SEQUENCE [MRNA] (ISOFORM 1)</scope>
    <scope>PARTIAL PROTEIN SEQUENCE</scope>
    <source>
        <tissue>Brain</tissue>
    </source>
</reference>
<reference key="6">
    <citation type="journal article" date="2004" name="Genome Res.">
        <title>The status, quality, and expansion of the NIH full-length cDNA project: the Mammalian Gene Collection (MGC).</title>
        <authorList>
            <consortium name="The MGC Project Team"/>
        </authorList>
    </citation>
    <scope>NUCLEOTIDE SEQUENCE [LARGE SCALE MRNA] (ISOFORM 1)</scope>
    <source>
        <tissue>Brain</tissue>
    </source>
</reference>
<reference key="7">
    <citation type="submission" date="2007-04" db="UniProtKB">
        <authorList>
            <person name="Lubec G."/>
            <person name="Diao W."/>
        </authorList>
    </citation>
    <scope>PROTEIN SEQUENCE OF 47-82 AND 407-415</scope>
    <scope>IDENTIFICATION BY MASS SPECTROMETRY</scope>
    <source>
        <strain>Sprague-Dawley</strain>
        <tissue>Hippocampus</tissue>
    </source>
</reference>
<reference key="8">
    <citation type="journal article" date="2002" name="Mol. Biol. Cell">
        <title>Pancreatic beta-cell protein granuphilin binds Rab3 and Munc-18 and controls exocytosis.</title>
        <authorList>
            <person name="Coppola T."/>
            <person name="Frantz C."/>
            <person name="Perret-Menoud V."/>
            <person name="Gattesco S."/>
            <person name="Hirling H."/>
            <person name="Regazzi R."/>
        </authorList>
    </citation>
    <scope>INTERACTION WITH SYTL4</scope>
</reference>
<reference key="9">
    <citation type="journal article" date="2011" name="Traffic">
        <title>Involvement of Rab3A in vesicle priming during exocytosis: interaction with Munc13-1 and Munc18-1.</title>
        <authorList>
            <person name="Huang C.C."/>
            <person name="Yang D.M."/>
            <person name="Lin C.C."/>
            <person name="Kao L.S."/>
        </authorList>
    </citation>
    <scope>FUNCTION</scope>
    <scope>INTERACTION WITH RAB3A</scope>
</reference>
<reference key="10">
    <citation type="journal article" date="2012" name="Nat. Commun.">
        <title>Quantitative maps of protein phosphorylation sites across 14 different rat organs and tissues.</title>
        <authorList>
            <person name="Lundby A."/>
            <person name="Secher A."/>
            <person name="Lage K."/>
            <person name="Nordsborg N.B."/>
            <person name="Dmytriyev A."/>
            <person name="Lundby C."/>
            <person name="Olsen J.V."/>
        </authorList>
    </citation>
    <scope>PHOSPHORYLATION [LARGE SCALE ANALYSIS] AT SER-476; SER-509 AND SER-593</scope>
    <scope>PHOSPHORYLATION [LARGE SCALE ANALYSIS] AT SER-594 (ISOFORM 2)</scope>
    <scope>IDENTIFICATION BY MASS SPECTROMETRY [LARGE SCALE ANALYSIS]</scope>
</reference>
<reference key="11">
    <citation type="journal article" date="2000" name="Nature">
        <title>Three-dimensional structure of the neuronal-Sec1-syntaxin 1a complex.</title>
        <authorList>
            <person name="Misura K.M.S."/>
            <person name="Scheller R.H."/>
            <person name="Weis W.I."/>
        </authorList>
    </citation>
    <scope>X-RAY CRYSTALLOGRAPHY (2.6 ANGSTROMS) OF 4-592 IN COMPLEX WITH STX1A</scope>
</reference>
<feature type="chain" id="PRO_0000206279" description="Syntaxin-binding protein 1">
    <location>
        <begin position="1"/>
        <end position="594"/>
    </location>
</feature>
<feature type="modified residue" description="Phosphoserine" evidence="9">
    <location>
        <position position="476"/>
    </location>
</feature>
<feature type="modified residue" description="Phosphoserine" evidence="9">
    <location>
        <position position="509"/>
    </location>
</feature>
<feature type="modified residue" description="Phosphoserine" evidence="1">
    <location>
        <position position="511"/>
    </location>
</feature>
<feature type="modified residue" description="Phosphoserine" evidence="1">
    <location>
        <position position="516"/>
    </location>
</feature>
<feature type="modified residue" description="Phosphoserine" evidence="9">
    <location>
        <position position="593"/>
    </location>
</feature>
<feature type="splice variant" id="VSP_010497" description="In isoform 2." evidence="7">
    <original>QKLLDTLKKLNKTDEEISS</original>
    <variation>TKFLMDLRHPDFRESSRVSFEDQAPTME</variation>
    <location>
        <begin position="576"/>
        <end position="594"/>
    </location>
</feature>
<feature type="helix" evidence="12">
    <location>
        <begin position="6"/>
        <end position="17"/>
    </location>
</feature>
<feature type="turn" evidence="12">
    <location>
        <begin position="18"/>
        <end position="21"/>
    </location>
</feature>
<feature type="strand" evidence="12">
    <location>
        <begin position="29"/>
        <end position="33"/>
    </location>
</feature>
<feature type="helix" evidence="12">
    <location>
        <begin position="35"/>
        <end position="42"/>
    </location>
</feature>
<feature type="helix" evidence="12">
    <location>
        <begin position="47"/>
        <end position="51"/>
    </location>
</feature>
<feature type="turn" evidence="12">
    <location>
        <begin position="52"/>
        <end position="54"/>
    </location>
</feature>
<feature type="strand" evidence="12">
    <location>
        <begin position="55"/>
        <end position="60"/>
    </location>
</feature>
<feature type="strand" evidence="12">
    <location>
        <begin position="71"/>
        <end position="77"/>
    </location>
</feature>
<feature type="helix" evidence="12">
    <location>
        <begin position="81"/>
        <end position="89"/>
    </location>
</feature>
<feature type="turn" evidence="10">
    <location>
        <begin position="90"/>
        <end position="92"/>
    </location>
</feature>
<feature type="helix" evidence="12">
    <location>
        <begin position="94"/>
        <end position="96"/>
    </location>
</feature>
<feature type="strand" evidence="11">
    <location>
        <begin position="98"/>
        <end position="100"/>
    </location>
</feature>
<feature type="strand" evidence="12">
    <location>
        <begin position="102"/>
        <end position="108"/>
    </location>
</feature>
<feature type="helix" evidence="12">
    <location>
        <begin position="112"/>
        <end position="119"/>
    </location>
</feature>
<feature type="helix" evidence="12">
    <location>
        <begin position="122"/>
        <end position="126"/>
    </location>
</feature>
<feature type="strand" evidence="12">
    <location>
        <begin position="127"/>
        <end position="132"/>
    </location>
</feature>
<feature type="strand" evidence="12">
    <location>
        <begin position="137"/>
        <end position="141"/>
    </location>
</feature>
<feature type="strand" evidence="12">
    <location>
        <begin position="144"/>
        <end position="146"/>
    </location>
</feature>
<feature type="helix" evidence="12">
    <location>
        <begin position="152"/>
        <end position="157"/>
    </location>
</feature>
<feature type="helix" evidence="12">
    <location>
        <begin position="159"/>
        <end position="161"/>
    </location>
</feature>
<feature type="helix" evidence="14">
    <location>
        <begin position="162"/>
        <end position="164"/>
    </location>
</feature>
<feature type="helix" evidence="12">
    <location>
        <begin position="166"/>
        <end position="183"/>
    </location>
</feature>
<feature type="strand" evidence="12">
    <location>
        <begin position="188"/>
        <end position="191"/>
    </location>
</feature>
<feature type="strand" evidence="15">
    <location>
        <begin position="193"/>
        <end position="196"/>
    </location>
</feature>
<feature type="helix" evidence="12">
    <location>
        <begin position="197"/>
        <end position="215"/>
    </location>
</feature>
<feature type="turn" evidence="10">
    <location>
        <begin position="217"/>
        <end position="220"/>
    </location>
</feature>
<feature type="helix" evidence="12">
    <location>
        <begin position="225"/>
        <end position="227"/>
    </location>
</feature>
<feature type="strand" evidence="12">
    <location>
        <begin position="229"/>
        <end position="234"/>
    </location>
</feature>
<feature type="helix" evidence="12">
    <location>
        <begin position="235"/>
        <end position="237"/>
    </location>
</feature>
<feature type="turn" evidence="12">
    <location>
        <begin position="241"/>
        <end position="243"/>
    </location>
</feature>
<feature type="helix" evidence="12">
    <location>
        <begin position="249"/>
        <end position="256"/>
    </location>
</feature>
<feature type="strand" evidence="12">
    <location>
        <begin position="263"/>
        <end position="280"/>
    </location>
</feature>
<feature type="helix" evidence="12">
    <location>
        <begin position="286"/>
        <end position="291"/>
    </location>
</feature>
<feature type="strand" evidence="16">
    <location>
        <begin position="292"/>
        <end position="295"/>
    </location>
</feature>
<feature type="helix" evidence="12">
    <location>
        <begin position="296"/>
        <end position="313"/>
    </location>
</feature>
<feature type="turn" evidence="16">
    <location>
        <begin position="321"/>
        <end position="325"/>
    </location>
</feature>
<feature type="helix" evidence="12">
    <location>
        <begin position="330"/>
        <end position="333"/>
    </location>
</feature>
<feature type="helix" evidence="12">
    <location>
        <begin position="335"/>
        <end position="337"/>
    </location>
</feature>
<feature type="helix" evidence="12">
    <location>
        <begin position="338"/>
        <end position="358"/>
    </location>
</feature>
<feature type="helix" evidence="12">
    <location>
        <begin position="361"/>
        <end position="374"/>
    </location>
</feature>
<feature type="strand" evidence="14">
    <location>
        <begin position="380"/>
        <end position="382"/>
    </location>
</feature>
<feature type="helix" evidence="12">
    <location>
        <begin position="387"/>
        <end position="395"/>
    </location>
</feature>
<feature type="strand" evidence="14">
    <location>
        <begin position="397"/>
        <end position="399"/>
    </location>
</feature>
<feature type="helix" evidence="12">
    <location>
        <begin position="401"/>
        <end position="415"/>
    </location>
</feature>
<feature type="helix" evidence="12">
    <location>
        <begin position="420"/>
        <end position="430"/>
    </location>
</feature>
<feature type="helix" evidence="12">
    <location>
        <begin position="434"/>
        <end position="442"/>
    </location>
</feature>
<feature type="helix" evidence="12">
    <location>
        <begin position="443"/>
        <end position="446"/>
    </location>
</feature>
<feature type="turn" evidence="10">
    <location>
        <begin position="455"/>
        <end position="457"/>
    </location>
</feature>
<feature type="turn" evidence="15">
    <location>
        <begin position="468"/>
        <end position="470"/>
    </location>
</feature>
<feature type="helix" evidence="13">
    <location>
        <begin position="474"/>
        <end position="476"/>
    </location>
</feature>
<feature type="helix" evidence="12">
    <location>
        <begin position="481"/>
        <end position="490"/>
    </location>
</feature>
<feature type="turn" evidence="12">
    <location>
        <begin position="496"/>
        <end position="498"/>
    </location>
</feature>
<feature type="strand" evidence="12">
    <location>
        <begin position="501"/>
        <end position="503"/>
    </location>
</feature>
<feature type="strand" evidence="12">
    <location>
        <begin position="535"/>
        <end position="542"/>
    </location>
</feature>
<feature type="helix" evidence="12">
    <location>
        <begin position="547"/>
        <end position="560"/>
    </location>
</feature>
<feature type="strand" evidence="12">
    <location>
        <begin position="564"/>
        <end position="573"/>
    </location>
</feature>
<feature type="helix" evidence="12">
    <location>
        <begin position="575"/>
        <end position="583"/>
    </location>
</feature>
<feature type="turn" evidence="12">
    <location>
        <begin position="584"/>
        <end position="586"/>
    </location>
</feature>
<feature type="helix" evidence="16">
    <location>
        <begin position="589"/>
        <end position="592"/>
    </location>
</feature>
<feature type="modified residue" description="Phosphoserine" evidence="9">
    <location sequence="P61765-2">
        <position position="594"/>
    </location>
</feature>
<name>STXB1_RAT</name>